<accession>B2IKA4</accession>
<feature type="chain" id="PRO_1000090960" description="Aspartate--tRNA(Asp/Asn) ligase">
    <location>
        <begin position="1"/>
        <end position="597"/>
    </location>
</feature>
<feature type="region of interest" description="Aspartate" evidence="1">
    <location>
        <begin position="199"/>
        <end position="202"/>
    </location>
</feature>
<feature type="binding site" evidence="1">
    <location>
        <position position="175"/>
    </location>
    <ligand>
        <name>L-aspartate</name>
        <dbReference type="ChEBI" id="CHEBI:29991"/>
    </ligand>
</feature>
<feature type="binding site" evidence="1">
    <location>
        <begin position="221"/>
        <end position="223"/>
    </location>
    <ligand>
        <name>ATP</name>
        <dbReference type="ChEBI" id="CHEBI:30616"/>
    </ligand>
</feature>
<feature type="binding site" evidence="1">
    <location>
        <position position="221"/>
    </location>
    <ligand>
        <name>L-aspartate</name>
        <dbReference type="ChEBI" id="CHEBI:29991"/>
    </ligand>
</feature>
<feature type="binding site" evidence="1">
    <location>
        <position position="456"/>
    </location>
    <ligand>
        <name>L-aspartate</name>
        <dbReference type="ChEBI" id="CHEBI:29991"/>
    </ligand>
</feature>
<feature type="binding site" evidence="1">
    <location>
        <position position="490"/>
    </location>
    <ligand>
        <name>ATP</name>
        <dbReference type="ChEBI" id="CHEBI:30616"/>
    </ligand>
</feature>
<feature type="binding site" evidence="1">
    <location>
        <position position="497"/>
    </location>
    <ligand>
        <name>L-aspartate</name>
        <dbReference type="ChEBI" id="CHEBI:29991"/>
    </ligand>
</feature>
<feature type="binding site" evidence="1">
    <location>
        <begin position="542"/>
        <end position="545"/>
    </location>
    <ligand>
        <name>ATP</name>
        <dbReference type="ChEBI" id="CHEBI:30616"/>
    </ligand>
</feature>
<feature type="site" description="Important for tRNA non-discrimination" evidence="1">
    <location>
        <position position="33"/>
    </location>
</feature>
<feature type="site" description="Important for tRNA non-discrimination" evidence="1">
    <location>
        <position position="83"/>
    </location>
</feature>
<gene>
    <name evidence="1" type="primary">aspS</name>
    <name type="ordered locus">Bind_1396</name>
</gene>
<sequence>MHRYRTHTCGDLREAQADETTRLSGWCHRIRDHGGVLFIDLRDHYGITQCVVDPDSKAFPLAEKLRSEWVVRIDGLVRKRPSGTENPEMPTGFIEIYVTEIEVLGAAAELPMPVFGDIDYPEDIRLKYRFLDLRREKLHKNIMLRGQVIDSLRRRMKEQGFFEFQTPILTASSPEGARDFLVPSRIHAGKFYALPQAPQQYKQLLMMAGFDRYFQIAPCFRDEDPRADRLPGEFYQLDVEMSFITQEDVFAAMEPVIRGAFEEFGNGQPVTQTFPRIPYAEAMLKYGSDKPDLRNPLVIADVTDLFARDDVSFNAFKNVIKKGGVVRAIPATGAASQPRSFFDKLNDWAKSEGAAGLGYVIFEGSDEAPVGKGPIAKFLPAEVQAAIVTRADLKAGDAVFFACDIEEKAAKLAGAARLRIGHELGLSKTGVFELCWIVDFPMYEWNEDDKTVDFSHNPFSMPQGGLEALQTQDPLTIKAFQYDIACNGYEIASGGIRNHRPEAMVKAFEIAGYGEETVVERFGGMYRAFQYGAPPHGGMAAGVDRIIMLLAGVQNLREISLFPMNQKAEDLLMGAPSEATTKQLRELHIRLNLPEPK</sequence>
<comment type="function">
    <text evidence="1">Aspartyl-tRNA synthetase with relaxed tRNA specificity since it is able to aspartylate not only its cognate tRNA(Asp) but also tRNA(Asn). Reaction proceeds in two steps: L-aspartate is first activated by ATP to form Asp-AMP and then transferred to the acceptor end of tRNA(Asp/Asn).</text>
</comment>
<comment type="catalytic activity">
    <reaction evidence="1">
        <text>tRNA(Asx) + L-aspartate + ATP = L-aspartyl-tRNA(Asx) + AMP + diphosphate</text>
        <dbReference type="Rhea" id="RHEA:18349"/>
        <dbReference type="Rhea" id="RHEA-COMP:9710"/>
        <dbReference type="Rhea" id="RHEA-COMP:9711"/>
        <dbReference type="ChEBI" id="CHEBI:29991"/>
        <dbReference type="ChEBI" id="CHEBI:30616"/>
        <dbReference type="ChEBI" id="CHEBI:33019"/>
        <dbReference type="ChEBI" id="CHEBI:78442"/>
        <dbReference type="ChEBI" id="CHEBI:78516"/>
        <dbReference type="ChEBI" id="CHEBI:456215"/>
        <dbReference type="EC" id="6.1.1.23"/>
    </reaction>
</comment>
<comment type="subunit">
    <text evidence="1">Homodimer.</text>
</comment>
<comment type="subcellular location">
    <subcellularLocation>
        <location evidence="1">Cytoplasm</location>
    </subcellularLocation>
</comment>
<comment type="similarity">
    <text evidence="1">Belongs to the class-II aminoacyl-tRNA synthetase family. Type 1 subfamily.</text>
</comment>
<dbReference type="EC" id="6.1.1.23" evidence="1"/>
<dbReference type="EMBL" id="CP001016">
    <property type="protein sequence ID" value="ACB95036.1"/>
    <property type="molecule type" value="Genomic_DNA"/>
</dbReference>
<dbReference type="RefSeq" id="WP_012384393.1">
    <property type="nucleotide sequence ID" value="NC_010581.1"/>
</dbReference>
<dbReference type="SMR" id="B2IKA4"/>
<dbReference type="STRING" id="395963.Bind_1396"/>
<dbReference type="KEGG" id="bid:Bind_1396"/>
<dbReference type="eggNOG" id="COG0173">
    <property type="taxonomic scope" value="Bacteria"/>
</dbReference>
<dbReference type="HOGENOM" id="CLU_014330_3_2_5"/>
<dbReference type="OrthoDB" id="9802326at2"/>
<dbReference type="Proteomes" id="UP000001695">
    <property type="component" value="Chromosome"/>
</dbReference>
<dbReference type="GO" id="GO:0005737">
    <property type="term" value="C:cytoplasm"/>
    <property type="evidence" value="ECO:0007669"/>
    <property type="project" value="UniProtKB-SubCell"/>
</dbReference>
<dbReference type="GO" id="GO:0004815">
    <property type="term" value="F:aspartate-tRNA ligase activity"/>
    <property type="evidence" value="ECO:0007669"/>
    <property type="project" value="UniProtKB-UniRule"/>
</dbReference>
<dbReference type="GO" id="GO:0050560">
    <property type="term" value="F:aspartate-tRNA(Asn) ligase activity"/>
    <property type="evidence" value="ECO:0007669"/>
    <property type="project" value="UniProtKB-EC"/>
</dbReference>
<dbReference type="GO" id="GO:0005524">
    <property type="term" value="F:ATP binding"/>
    <property type="evidence" value="ECO:0007669"/>
    <property type="project" value="UniProtKB-UniRule"/>
</dbReference>
<dbReference type="GO" id="GO:0003676">
    <property type="term" value="F:nucleic acid binding"/>
    <property type="evidence" value="ECO:0007669"/>
    <property type="project" value="InterPro"/>
</dbReference>
<dbReference type="GO" id="GO:0006422">
    <property type="term" value="P:aspartyl-tRNA aminoacylation"/>
    <property type="evidence" value="ECO:0007669"/>
    <property type="project" value="UniProtKB-UniRule"/>
</dbReference>
<dbReference type="CDD" id="cd00777">
    <property type="entry name" value="AspRS_core"/>
    <property type="match status" value="1"/>
</dbReference>
<dbReference type="CDD" id="cd04317">
    <property type="entry name" value="EcAspRS_like_N"/>
    <property type="match status" value="1"/>
</dbReference>
<dbReference type="Gene3D" id="3.30.930.10">
    <property type="entry name" value="Bira Bifunctional Protein, Domain 2"/>
    <property type="match status" value="1"/>
</dbReference>
<dbReference type="Gene3D" id="3.30.1360.30">
    <property type="entry name" value="GAD-like domain"/>
    <property type="match status" value="1"/>
</dbReference>
<dbReference type="Gene3D" id="2.40.50.140">
    <property type="entry name" value="Nucleic acid-binding proteins"/>
    <property type="match status" value="1"/>
</dbReference>
<dbReference type="HAMAP" id="MF_00044">
    <property type="entry name" value="Asp_tRNA_synth_type1"/>
    <property type="match status" value="1"/>
</dbReference>
<dbReference type="InterPro" id="IPR004364">
    <property type="entry name" value="Aa-tRNA-synt_II"/>
</dbReference>
<dbReference type="InterPro" id="IPR006195">
    <property type="entry name" value="aa-tRNA-synth_II"/>
</dbReference>
<dbReference type="InterPro" id="IPR045864">
    <property type="entry name" value="aa-tRNA-synth_II/BPL/LPL"/>
</dbReference>
<dbReference type="InterPro" id="IPR004524">
    <property type="entry name" value="Asp-tRNA-ligase_1"/>
</dbReference>
<dbReference type="InterPro" id="IPR047089">
    <property type="entry name" value="Asp-tRNA-ligase_1_N"/>
</dbReference>
<dbReference type="InterPro" id="IPR002312">
    <property type="entry name" value="Asp/Asn-tRNA-synth_IIb"/>
</dbReference>
<dbReference type="InterPro" id="IPR047090">
    <property type="entry name" value="AspRS_core"/>
</dbReference>
<dbReference type="InterPro" id="IPR004115">
    <property type="entry name" value="GAD-like_sf"/>
</dbReference>
<dbReference type="InterPro" id="IPR029351">
    <property type="entry name" value="GAD_dom"/>
</dbReference>
<dbReference type="InterPro" id="IPR012340">
    <property type="entry name" value="NA-bd_OB-fold"/>
</dbReference>
<dbReference type="InterPro" id="IPR004365">
    <property type="entry name" value="NA-bd_OB_tRNA"/>
</dbReference>
<dbReference type="NCBIfam" id="TIGR00459">
    <property type="entry name" value="aspS_bact"/>
    <property type="match status" value="1"/>
</dbReference>
<dbReference type="NCBIfam" id="NF001750">
    <property type="entry name" value="PRK00476.1"/>
    <property type="match status" value="1"/>
</dbReference>
<dbReference type="PANTHER" id="PTHR22594:SF5">
    <property type="entry name" value="ASPARTATE--TRNA LIGASE, MITOCHONDRIAL"/>
    <property type="match status" value="1"/>
</dbReference>
<dbReference type="PANTHER" id="PTHR22594">
    <property type="entry name" value="ASPARTYL/LYSYL-TRNA SYNTHETASE"/>
    <property type="match status" value="1"/>
</dbReference>
<dbReference type="Pfam" id="PF02938">
    <property type="entry name" value="GAD"/>
    <property type="match status" value="1"/>
</dbReference>
<dbReference type="Pfam" id="PF00152">
    <property type="entry name" value="tRNA-synt_2"/>
    <property type="match status" value="1"/>
</dbReference>
<dbReference type="Pfam" id="PF01336">
    <property type="entry name" value="tRNA_anti-codon"/>
    <property type="match status" value="1"/>
</dbReference>
<dbReference type="PRINTS" id="PR01042">
    <property type="entry name" value="TRNASYNTHASP"/>
</dbReference>
<dbReference type="SUPFAM" id="SSF55681">
    <property type="entry name" value="Class II aaRS and biotin synthetases"/>
    <property type="match status" value="1"/>
</dbReference>
<dbReference type="SUPFAM" id="SSF55261">
    <property type="entry name" value="GAD domain-like"/>
    <property type="match status" value="1"/>
</dbReference>
<dbReference type="SUPFAM" id="SSF50249">
    <property type="entry name" value="Nucleic acid-binding proteins"/>
    <property type="match status" value="1"/>
</dbReference>
<dbReference type="PROSITE" id="PS50862">
    <property type="entry name" value="AA_TRNA_LIGASE_II"/>
    <property type="match status" value="1"/>
</dbReference>
<proteinExistence type="inferred from homology"/>
<keyword id="KW-0030">Aminoacyl-tRNA synthetase</keyword>
<keyword id="KW-0067">ATP-binding</keyword>
<keyword id="KW-0963">Cytoplasm</keyword>
<keyword id="KW-0436">Ligase</keyword>
<keyword id="KW-0547">Nucleotide-binding</keyword>
<keyword id="KW-0648">Protein biosynthesis</keyword>
<keyword id="KW-1185">Reference proteome</keyword>
<reference key="1">
    <citation type="journal article" date="2010" name="J. Bacteriol.">
        <title>Complete genome sequence of Beijerinckia indica subsp. indica.</title>
        <authorList>
            <person name="Tamas I."/>
            <person name="Dedysh S.N."/>
            <person name="Liesack W."/>
            <person name="Stott M.B."/>
            <person name="Alam M."/>
            <person name="Murrell J.C."/>
            <person name="Dunfield P.F."/>
        </authorList>
    </citation>
    <scope>NUCLEOTIDE SEQUENCE [LARGE SCALE GENOMIC DNA]</scope>
    <source>
        <strain>ATCC 9039 / DSM 1715 / NCIMB 8712</strain>
    </source>
</reference>
<name>SYDND_BEII9</name>
<protein>
    <recommendedName>
        <fullName evidence="1">Aspartate--tRNA(Asp/Asn) ligase</fullName>
        <ecNumber evidence="1">6.1.1.23</ecNumber>
    </recommendedName>
    <alternativeName>
        <fullName evidence="1">Aspartyl-tRNA synthetase</fullName>
        <shortName evidence="1">AspRS</shortName>
    </alternativeName>
    <alternativeName>
        <fullName evidence="1">Non-discriminating aspartyl-tRNA synthetase</fullName>
        <shortName evidence="1">ND-AspRS</shortName>
    </alternativeName>
</protein>
<organism>
    <name type="scientific">Beijerinckia indica subsp. indica (strain ATCC 9039 / DSM 1715 / NCIMB 8712)</name>
    <dbReference type="NCBI Taxonomy" id="395963"/>
    <lineage>
        <taxon>Bacteria</taxon>
        <taxon>Pseudomonadati</taxon>
        <taxon>Pseudomonadota</taxon>
        <taxon>Alphaproteobacteria</taxon>
        <taxon>Hyphomicrobiales</taxon>
        <taxon>Beijerinckiaceae</taxon>
        <taxon>Beijerinckia</taxon>
    </lineage>
</organism>
<evidence type="ECO:0000255" key="1">
    <source>
        <dbReference type="HAMAP-Rule" id="MF_00044"/>
    </source>
</evidence>